<protein>
    <recommendedName>
        <fullName>Alpha-ketoglutaric semialdehyde dehydrogenase 1</fullName>
        <shortName>alphaKGSA dehydrogenase 1</shortName>
        <ecNumber evidence="2">1.2.1.26</ecNumber>
    </recommendedName>
    <alternativeName>
        <fullName>2,5-dioxovalerate dehydrogenase 1</fullName>
    </alternativeName>
    <alternativeName>
        <fullName>2-oxoglutarate semialdehyde dehydrogenase 1</fullName>
    </alternativeName>
    <alternativeName>
        <fullName evidence="3">KGSADH-I</fullName>
    </alternativeName>
    <alternativeName>
        <fullName>Succinate-semialdehyde dehydrogenase [NAD(+)]</fullName>
        <shortName>SSDH</shortName>
        <ecNumber>1.2.1.24</ecNumber>
    </alternativeName>
</protein>
<gene>
    <name type="primary">araE</name>
</gene>
<sequence length="481" mass="50831">MANVTYTDTQLLIDGEWVDAASGKTIDVVNPATGKPIGRVAHAGIADLDRALAAAQSGFEAWRKVPAHERAATMRKAAALVRERADAIAQLMTQEQGKPLTEARVEVLSAADIIEWFADEGRRVYGRIVPPRNLGAQQTVVKEPVGPVAAFTPWNFPVNQVVRKLSAALATGCSFLVKAPEETPASPAALLRAFVDAGVPAGVIGLVYGDPAEISSYLIPHPVIRKVTFTGSTPVGKQLASLAGLHMKRATMELGGHAPVIVAEDADVALAVKAAGGAKFRNAGQVCISPTRFLVHNSIRDEFTRALVKHAEGLKVGNGLEEGTTLGALANPRRLTAMASVIDNARKVGASIETGGERIGSEGNFFAPTVIANVPLDADVFNNEPFGPVAAIRGFDKLEEAIAEANRLPFGLAGYAFTRSFANVHLLTQRLEVGMLWINQPATPWPEMPFGGVKDSGYGSEGGPEALEPYLVTKSVTVMAV</sequence>
<comment type="function">
    <text evidence="2">Catalyzes the NAD(P)(+)-dependent oxidation of alpha-ketoglutaric semialdehyde (alphaKGSA) to alpha-ketoglutarate. Is involved in a degradation pathway of L-arabinose that allows A.brasilense to grow on L-arabinose as a sole carbon source. Prefers NAD(+) to NADP(+) as a cosubstrate. Displays broad substrate specificity: exhibits the highest activity with alphaKGSA and succinic semialdehyde as substrates, but to a lesser extent, is also active with glutaraldehyde, benzaldehyde, and a number of aldehydes from C3 to C8.</text>
</comment>
<comment type="catalytic activity">
    <reaction evidence="2">
        <text>2,5-dioxopentanoate + NADP(+) + H2O = 2-oxoglutarate + NADPH + 2 H(+)</text>
        <dbReference type="Rhea" id="RHEA:11296"/>
        <dbReference type="ChEBI" id="CHEBI:15377"/>
        <dbReference type="ChEBI" id="CHEBI:15378"/>
        <dbReference type="ChEBI" id="CHEBI:16810"/>
        <dbReference type="ChEBI" id="CHEBI:57783"/>
        <dbReference type="ChEBI" id="CHEBI:58136"/>
        <dbReference type="ChEBI" id="CHEBI:58349"/>
        <dbReference type="EC" id="1.2.1.26"/>
    </reaction>
</comment>
<comment type="catalytic activity">
    <reaction evidence="2">
        <text>2,5-dioxopentanoate + NAD(+) + H2O = 2-oxoglutarate + NADH + 2 H(+)</text>
        <dbReference type="Rhea" id="RHEA:47152"/>
        <dbReference type="ChEBI" id="CHEBI:15377"/>
        <dbReference type="ChEBI" id="CHEBI:15378"/>
        <dbReference type="ChEBI" id="CHEBI:16810"/>
        <dbReference type="ChEBI" id="CHEBI:57540"/>
        <dbReference type="ChEBI" id="CHEBI:57945"/>
        <dbReference type="ChEBI" id="CHEBI:58136"/>
    </reaction>
</comment>
<comment type="catalytic activity">
    <reaction evidence="2">
        <text>succinate semialdehyde + NAD(+) + H2O = succinate + NADH + 2 H(+)</text>
        <dbReference type="Rhea" id="RHEA:13217"/>
        <dbReference type="ChEBI" id="CHEBI:15377"/>
        <dbReference type="ChEBI" id="CHEBI:15378"/>
        <dbReference type="ChEBI" id="CHEBI:30031"/>
        <dbReference type="ChEBI" id="CHEBI:57540"/>
        <dbReference type="ChEBI" id="CHEBI:57706"/>
        <dbReference type="ChEBI" id="CHEBI:57945"/>
        <dbReference type="EC" id="1.2.1.24"/>
    </reaction>
</comment>
<comment type="biophysicochemical properties">
    <kinetics>
        <KM evidence="2">11 uM for alpha-ketoglutaric semialdehyde (in the presence of NAD(+), at 25 degrees Celsius and pH 7.2)</KM>
        <KM evidence="2">15.9 uM for alpha-ketoglutaric semialdehyde (in the presence of NADP(+), at 25 degrees Celsius and pH 7.2)</KM>
        <KM evidence="2">38.5 uM for succinic semialdehyde (in the presence of NAD(+), at 25 degrees Celsius and pH 7.2)</KM>
        <KM evidence="2">16.3 uM for glutaraldehyde (in the presence of NAD(+), at 25 degrees Celsius and pH 7.2)</KM>
        <Vmax evidence="2">42.5 umol/min/mg enzyme for the oxidation of alpha-ketoglutaric semialdehyde with NAD(+) (at 25 degrees Celsius and pH 7.2)</Vmax>
        <Vmax evidence="2">9.85 umol/min/mg enzyme for the oxidation of alpha-ketoglutaric semialdehyde with NADP(+) (at 25 degrees Celsius and pH 7.2)</Vmax>
        <Vmax evidence="2">24.7 umol/min/mg enzyme for the oxidation of succinic semialdehyde with NAD(+) (at 25 degrees Celsius and pH 7.2)</Vmax>
        <Vmax evidence="2">13.9 umol/min/mg enzyme for the oxidation of glutaraldehyde with NAD(+) (at 25 degrees Celsius and pH 7.2)</Vmax>
        <text>The catalytic efficiency with alphaKGSA in the presence of NAD(+) is 5.2- and 6.2-fold higher than with succinic semialdehyde and glutaraldehyde, respectively. When NADP(+) is used as a cosubstrate, the catalytic efficiency with alphaKGSA drops 6-fold compared with that in the presence of NAD(+).</text>
    </kinetics>
</comment>
<comment type="subunit">
    <text evidence="2">Homotetramer.</text>
</comment>
<comment type="induction">
    <text evidence="2">Induced by L-arabinose, and to a lesser extent by D-glucose or a nutrient-rich medium.</text>
</comment>
<comment type="disruption phenotype">
    <text evidence="2">Cells lacking this gene are unable to grow on L-arabinose as a sole carbon source but grow on a nutrient-rich medium or D-glucose at the same growth rate as the wild-type strain. Moreover, both the wild-type and the mutant strains can grow on D-glucarate or D-galactarate as a sole carbon source.</text>
</comment>
<comment type="miscellaneous">
    <text>A.brasilense possesses two isozymes of alphaKGSA dehydrogenase with essential physiological roles for the L-arabinose and D-glucarate/D-galactarate metabolisms, respectively. The L-arabinose isozyme was isolated in PubMed:16835232 and is described in this entry. The other NAD(+)-preferring isozyme of alphaKGSA dehydrogenase is induced dramatically by D-glucarate or D-galactarate but not by L-arabinose.</text>
</comment>
<comment type="similarity">
    <text evidence="3">Belongs to the aldehyde dehydrogenase family.</text>
</comment>
<accession>Q1JUP4</accession>
<keyword id="KW-0002">3D-structure</keyword>
<keyword id="KW-0054">Arabinose catabolism</keyword>
<keyword id="KW-0119">Carbohydrate metabolism</keyword>
<keyword id="KW-0903">Direct protein sequencing</keyword>
<keyword id="KW-0520">NAD</keyword>
<keyword id="KW-0521">NADP</keyword>
<keyword id="KW-0560">Oxidoreductase</keyword>
<dbReference type="EC" id="1.2.1.26" evidence="2"/>
<dbReference type="EC" id="1.2.1.24"/>
<dbReference type="EMBL" id="AB241137">
    <property type="protein sequence ID" value="BAE94276.1"/>
    <property type="molecule type" value="Genomic_DNA"/>
</dbReference>
<dbReference type="PDB" id="5X5T">
    <property type="method" value="X-ray"/>
    <property type="resolution" value="2.25 A"/>
    <property type="chains" value="A/B=2-481"/>
</dbReference>
<dbReference type="PDB" id="5X5U">
    <property type="method" value="X-ray"/>
    <property type="resolution" value="2.30 A"/>
    <property type="chains" value="A/B=2-481"/>
</dbReference>
<dbReference type="PDBsum" id="5X5T"/>
<dbReference type="PDBsum" id="5X5U"/>
<dbReference type="SMR" id="Q1JUP4"/>
<dbReference type="BRENDA" id="1.2.1.24">
    <property type="organism ID" value="611"/>
</dbReference>
<dbReference type="BRENDA" id="1.2.1.26">
    <property type="organism ID" value="611"/>
</dbReference>
<dbReference type="SABIO-RK" id="Q1JUP4"/>
<dbReference type="GO" id="GO:0047533">
    <property type="term" value="F:2,5-dioxovalerate dehydrogenase (NADP+) activity"/>
    <property type="evidence" value="ECO:0000314"/>
    <property type="project" value="UniProtKB"/>
</dbReference>
<dbReference type="GO" id="GO:0070403">
    <property type="term" value="F:NAD+ binding"/>
    <property type="evidence" value="ECO:0000314"/>
    <property type="project" value="UniProtKB"/>
</dbReference>
<dbReference type="GO" id="GO:0070401">
    <property type="term" value="F:NADP+ binding"/>
    <property type="evidence" value="ECO:0000314"/>
    <property type="project" value="UniProtKB"/>
</dbReference>
<dbReference type="GO" id="GO:0004777">
    <property type="term" value="F:succinate-semialdehyde dehydrogenase (NAD+) activity"/>
    <property type="evidence" value="ECO:0000314"/>
    <property type="project" value="UniProtKB"/>
</dbReference>
<dbReference type="GO" id="GO:0009450">
    <property type="term" value="P:gamma-aminobutyric acid catabolic process"/>
    <property type="evidence" value="ECO:0007669"/>
    <property type="project" value="TreeGrafter"/>
</dbReference>
<dbReference type="GO" id="GO:0019570">
    <property type="term" value="P:L-arabinose catabolic process to 2-oxoglutarate"/>
    <property type="evidence" value="ECO:0000314"/>
    <property type="project" value="UniProtKB"/>
</dbReference>
<dbReference type="GO" id="GO:0051262">
    <property type="term" value="P:protein tetramerization"/>
    <property type="evidence" value="ECO:0000314"/>
    <property type="project" value="UniProtKB"/>
</dbReference>
<dbReference type="CDD" id="cd07103">
    <property type="entry name" value="ALDH_F5_SSADH_GabD"/>
    <property type="match status" value="1"/>
</dbReference>
<dbReference type="FunFam" id="3.40.309.10:FF:000009">
    <property type="entry name" value="Aldehyde dehydrogenase A"/>
    <property type="match status" value="1"/>
</dbReference>
<dbReference type="FunFam" id="3.40.605.10:FF:000033">
    <property type="entry name" value="NAD-dependent succinate-semialdehyde dehydrogenase"/>
    <property type="match status" value="1"/>
</dbReference>
<dbReference type="Gene3D" id="3.40.605.10">
    <property type="entry name" value="Aldehyde Dehydrogenase, Chain A, domain 1"/>
    <property type="match status" value="1"/>
</dbReference>
<dbReference type="Gene3D" id="3.40.309.10">
    <property type="entry name" value="Aldehyde Dehydrogenase, Chain A, domain 2"/>
    <property type="match status" value="1"/>
</dbReference>
<dbReference type="InterPro" id="IPR016161">
    <property type="entry name" value="Ald_DH/histidinol_DH"/>
</dbReference>
<dbReference type="InterPro" id="IPR016163">
    <property type="entry name" value="Ald_DH_C"/>
</dbReference>
<dbReference type="InterPro" id="IPR016162">
    <property type="entry name" value="Ald_DH_N"/>
</dbReference>
<dbReference type="InterPro" id="IPR015590">
    <property type="entry name" value="Aldehyde_DH_dom"/>
</dbReference>
<dbReference type="InterPro" id="IPR050740">
    <property type="entry name" value="Aldehyde_DH_Superfamily"/>
</dbReference>
<dbReference type="PANTHER" id="PTHR43353">
    <property type="entry name" value="SUCCINATE-SEMIALDEHYDE DEHYDROGENASE, MITOCHONDRIAL"/>
    <property type="match status" value="1"/>
</dbReference>
<dbReference type="PANTHER" id="PTHR43353:SF5">
    <property type="entry name" value="SUCCINATE-SEMIALDEHYDE DEHYDROGENASE, MITOCHONDRIAL"/>
    <property type="match status" value="1"/>
</dbReference>
<dbReference type="Pfam" id="PF00171">
    <property type="entry name" value="Aldedh"/>
    <property type="match status" value="1"/>
</dbReference>
<dbReference type="SUPFAM" id="SSF53720">
    <property type="entry name" value="ALDH-like"/>
    <property type="match status" value="1"/>
</dbReference>
<reference key="1">
    <citation type="journal article" date="2006" name="J. Biol. Chem.">
        <title>A novel alpha-ketoglutaric semialdehyde dehydrogenase: evolutionary insight into an alternative pathway of bacterial L-arabinose metabolism.</title>
        <authorList>
            <person name="Watanabe S."/>
            <person name="Kodaki T."/>
            <person name="Makino K."/>
        </authorList>
    </citation>
    <scope>NUCLEOTIDE SEQUENCE [GENOMIC DNA]</scope>
    <scope>PROTEIN SEQUENCE OF 2-26; 93-97; 253-257 AND 339-343</scope>
    <scope>FUNCTION IN ARABINOSE DEGRADATION</scope>
    <scope>CATALYTIC ACTIVITY</scope>
    <scope>SUBSTRATE SPECIFICITY</scope>
    <scope>BIOPHYSICOCHEMICAL PROPERTIES</scope>
    <scope>INDUCTION</scope>
    <scope>DISRUPTION PHENOTYPE</scope>
    <scope>PATHWAY</scope>
    <scope>SUBUNIT</scope>
    <source>
        <strain>ATCC 29145 / DSM 1690 / IMET 11303 / Sp7</strain>
    </source>
</reference>
<reference key="2">
    <citation type="journal article" date="1982" name="J. Bacteriol.">
        <title>L-arabinose metabolism in Azospirillum brasiliense.</title>
        <authorList>
            <person name="Novick N.J."/>
            <person name="Tyler M.E."/>
        </authorList>
    </citation>
    <scope>PATHWAY</scope>
    <source>
        <strain>ATCC 29145 / DSM 1690 / IMET 11303 / Sp7</strain>
    </source>
</reference>
<feature type="chain" id="PRO_0000418508" description="Alpha-ketoglutaric semialdehyde dehydrogenase 1">
    <location>
        <begin position="1"/>
        <end position="481"/>
    </location>
</feature>
<feature type="active site" description="Proton acceptor" evidence="1">
    <location>
        <position position="253"/>
    </location>
</feature>
<feature type="active site" description="Nucleophile" evidence="1">
    <location>
        <position position="287"/>
    </location>
</feature>
<feature type="binding site" evidence="1">
    <location>
        <begin position="154"/>
        <end position="155"/>
    </location>
    <ligand>
        <name>NADP(+)</name>
        <dbReference type="ChEBI" id="CHEBI:58349"/>
    </ligand>
</feature>
<feature type="binding site" evidence="1">
    <location>
        <begin position="178"/>
        <end position="181"/>
    </location>
    <ligand>
        <name>NADP(+)</name>
        <dbReference type="ChEBI" id="CHEBI:58349"/>
    </ligand>
</feature>
<feature type="binding site" evidence="1">
    <location>
        <begin position="231"/>
        <end position="232"/>
    </location>
    <ligand>
        <name>NADP(+)</name>
        <dbReference type="ChEBI" id="CHEBI:58349"/>
    </ligand>
</feature>
<feature type="binding site" evidence="1">
    <location>
        <position position="254"/>
    </location>
    <ligand>
        <name>NADP(+)</name>
        <dbReference type="ChEBI" id="CHEBI:58349"/>
    </ligand>
</feature>
<feature type="binding site" evidence="1">
    <location>
        <position position="384"/>
    </location>
    <ligand>
        <name>NADP(+)</name>
        <dbReference type="ChEBI" id="CHEBI:58349"/>
    </ligand>
</feature>
<feature type="strand" evidence="4">
    <location>
        <begin position="11"/>
        <end position="13"/>
    </location>
</feature>
<feature type="strand" evidence="4">
    <location>
        <begin position="16"/>
        <end position="18"/>
    </location>
</feature>
<feature type="strand" evidence="4">
    <location>
        <begin position="25"/>
        <end position="29"/>
    </location>
</feature>
<feature type="turn" evidence="4">
    <location>
        <begin position="31"/>
        <end position="33"/>
    </location>
</feature>
<feature type="strand" evidence="4">
    <location>
        <begin position="36"/>
        <end position="41"/>
    </location>
</feature>
<feature type="helix" evidence="4">
    <location>
        <begin position="45"/>
        <end position="62"/>
    </location>
</feature>
<feature type="helix" evidence="4">
    <location>
        <begin position="67"/>
        <end position="83"/>
    </location>
</feature>
<feature type="helix" evidence="4">
    <location>
        <begin position="85"/>
        <end position="96"/>
    </location>
</feature>
<feature type="helix" evidence="4">
    <location>
        <begin position="100"/>
        <end position="121"/>
    </location>
</feature>
<feature type="strand" evidence="5">
    <location>
        <begin position="127"/>
        <end position="129"/>
    </location>
</feature>
<feature type="strand" evidence="4">
    <location>
        <begin position="136"/>
        <end position="144"/>
    </location>
</feature>
<feature type="strand" evidence="4">
    <location>
        <begin position="148"/>
        <end position="151"/>
    </location>
</feature>
<feature type="strand" evidence="4">
    <location>
        <begin position="154"/>
        <end position="156"/>
    </location>
</feature>
<feature type="helix" evidence="4">
    <location>
        <begin position="159"/>
        <end position="171"/>
    </location>
</feature>
<feature type="strand" evidence="4">
    <location>
        <begin position="175"/>
        <end position="178"/>
    </location>
</feature>
<feature type="helix" evidence="4">
    <location>
        <begin position="185"/>
        <end position="197"/>
    </location>
</feature>
<feature type="strand" evidence="4">
    <location>
        <begin position="203"/>
        <end position="207"/>
    </location>
</feature>
<feature type="helix" evidence="4">
    <location>
        <begin position="211"/>
        <end position="218"/>
    </location>
</feature>
<feature type="strand" evidence="4">
    <location>
        <begin position="226"/>
        <end position="231"/>
    </location>
</feature>
<feature type="helix" evidence="4">
    <location>
        <begin position="233"/>
        <end position="245"/>
    </location>
</feature>
<feature type="strand" evidence="4">
    <location>
        <begin position="249"/>
        <end position="253"/>
    </location>
</feature>
<feature type="strand" evidence="4">
    <location>
        <begin position="258"/>
        <end position="262"/>
    </location>
</feature>
<feature type="helix" evidence="4">
    <location>
        <begin position="268"/>
        <end position="280"/>
    </location>
</feature>
<feature type="helix" evidence="4">
    <location>
        <begin position="281"/>
        <end position="284"/>
    </location>
</feature>
<feature type="strand" evidence="4">
    <location>
        <begin position="290"/>
        <end position="296"/>
    </location>
</feature>
<feature type="helix" evidence="4">
    <location>
        <begin position="297"/>
        <end position="299"/>
    </location>
</feature>
<feature type="helix" evidence="4">
    <location>
        <begin position="300"/>
        <end position="312"/>
    </location>
</feature>
<feature type="helix" evidence="4">
    <location>
        <begin position="332"/>
        <end position="347"/>
    </location>
</feature>
<feature type="strand" evidence="4">
    <location>
        <begin position="351"/>
        <end position="354"/>
    </location>
</feature>
<feature type="strand" evidence="4">
    <location>
        <begin position="360"/>
        <end position="363"/>
    </location>
</feature>
<feature type="strand" evidence="4">
    <location>
        <begin position="369"/>
        <end position="373"/>
    </location>
</feature>
<feature type="helix" evidence="4">
    <location>
        <begin position="379"/>
        <end position="381"/>
    </location>
</feature>
<feature type="strand" evidence="4">
    <location>
        <begin position="387"/>
        <end position="397"/>
    </location>
</feature>
<feature type="helix" evidence="4">
    <location>
        <begin position="398"/>
        <end position="405"/>
    </location>
</feature>
<feature type="strand" evidence="4">
    <location>
        <begin position="407"/>
        <end position="417"/>
    </location>
</feature>
<feature type="helix" evidence="4">
    <location>
        <begin position="421"/>
        <end position="430"/>
    </location>
</feature>
<feature type="strand" evidence="4">
    <location>
        <begin position="434"/>
        <end position="440"/>
    </location>
</feature>
<feature type="helix" evidence="5">
    <location>
        <begin position="454"/>
        <end position="456"/>
    </location>
</feature>
<feature type="helix" evidence="4">
    <location>
        <begin position="464"/>
        <end position="470"/>
    </location>
</feature>
<feature type="strand" evidence="4">
    <location>
        <begin position="471"/>
        <end position="479"/>
    </location>
</feature>
<evidence type="ECO:0000250" key="1"/>
<evidence type="ECO:0000269" key="2">
    <source>
    </source>
</evidence>
<evidence type="ECO:0000305" key="3"/>
<evidence type="ECO:0007829" key="4">
    <source>
        <dbReference type="PDB" id="5X5T"/>
    </source>
</evidence>
<evidence type="ECO:0007829" key="5">
    <source>
        <dbReference type="PDB" id="5X5U"/>
    </source>
</evidence>
<proteinExistence type="evidence at protein level"/>
<organism>
    <name type="scientific">Azospirillum brasilense</name>
    <dbReference type="NCBI Taxonomy" id="192"/>
    <lineage>
        <taxon>Bacteria</taxon>
        <taxon>Pseudomonadati</taxon>
        <taxon>Pseudomonadota</taxon>
        <taxon>Alphaproteobacteria</taxon>
        <taxon>Rhodospirillales</taxon>
        <taxon>Azospirillaceae</taxon>
        <taxon>Azospirillum</taxon>
    </lineage>
</organism>
<name>KGSD1_AZOBR</name>